<comment type="function">
    <text evidence="1 2 3 4 5 6 7">Catalyzes the N-methylation of nicotinamide using the universal methyl donor S-adenosyl-L-methionine to form N1-methylnicotinamide and S-adenosyl-L-homocysteine, a predominant nicotinamide/vitamin B3 clearance pathway (PubMed:21823666, PubMed:23455543, PubMed:8182091). Plays a central role in regulating cellular methylation potential, by consuming S-adenosyl-L-methionine and limiting its availability for other methyltransferases. Actively mediates genome-wide epigenetic and transcriptional changes through hypomethylation of repressive chromatin marks, such as H3K27me3 (PubMed:23455543, PubMed:26571212, PubMed:31043742). In a developmental context, contributes to low levels of the repressive histone marks that characterize pluripotent embryonic stem cell pre-implantation state (PubMed:26571212). Acts as a metabolic regulator primarily on white adipose tissue energy expenditure as well as hepatic gluconeogenesis and cholesterol biosynthesis. In white adipocytes, regulates polyamine flux by consuming S-adenosyl-L-methionine which provides for propylamine group in polyamine biosynthesis, whereas by consuming nicotinamide controls NAD(+) levels through the salvage pathway (By similarity). Via its product N1-methylnicotinamide regulates protein acetylation in hepatocytes, by repressing the ubiquitination and increasing the stability of SIRT1 deacetylase (By similarity). Can also N-methylate other pyridines structurally related to nicotinamide and play a role in xenobiotic detoxification (PubMed:30044909).</text>
</comment>
<comment type="catalytic activity">
    <reaction evidence="2 3 7">
        <text>nicotinamide + S-adenosyl-L-methionine = 1-methylnicotinamide + S-adenosyl-L-homocysteine</text>
        <dbReference type="Rhea" id="RHEA:23884"/>
        <dbReference type="ChEBI" id="CHEBI:16797"/>
        <dbReference type="ChEBI" id="CHEBI:17154"/>
        <dbReference type="ChEBI" id="CHEBI:57856"/>
        <dbReference type="ChEBI" id="CHEBI:59789"/>
        <dbReference type="EC" id="2.1.1.1"/>
    </reaction>
    <physiologicalReaction direction="left-to-right" evidence="2 3 6">
        <dbReference type="Rhea" id="RHEA:23885"/>
    </physiologicalReaction>
</comment>
<comment type="activity regulation">
    <text evidence="5">Inactivated by deimination on Arg-132.</text>
</comment>
<comment type="biophysicochemical properties">
    <kinetics>
        <KM evidence="2">0.43 mM for nicotinamide (at pH 7.5 and 37 degrees Celsius)</KM>
        <KM evidence="2">0.105 mM for nicotinamide (at pH 8.6 and 37 degrees Celsius)</KM>
        <KM evidence="2">1.8 uM for S-adenosyl-L-methionine (at pH 7.5 and 37 degrees Celsius)</KM>
        <KM evidence="2">5 uM for S-adenosyl-L-methionine (at pH 8.6 and 37 degrees Celsius)</KM>
    </kinetics>
</comment>
<comment type="pathway">
    <text evidence="12 13">Cofactor metabolism.</text>
</comment>
<comment type="pathway">
    <text evidence="12 13">Amino-acid degradation.</text>
</comment>
<comment type="subunit">
    <text evidence="8">Monomer.</text>
</comment>
<comment type="subcellular location">
    <subcellularLocation>
        <location>Cytoplasm</location>
    </subcellularLocation>
</comment>
<comment type="tissue specificity">
    <text evidence="7">Predominantly expressed in the liver. A lower expression is seen in the kidney, lung, skeletal muscle, placenta and heart. Not detected in the brain or pancreas.</text>
</comment>
<comment type="PTM">
    <text evidence="5">Deiminated by PADI1 and PADI2.</text>
</comment>
<comment type="miscellaneous">
    <text evidence="3 6">Prominently expressed in the stroma of high-grade serous carcinomas (PubMed:31043742). In tumorigenesis, regulates the epigenetic reprograming of cancer cells associated with increased cell migration and metastasis (PubMed:23455543, PubMed:31043742).</text>
</comment>
<comment type="similarity">
    <text evidence="11">Belongs to the class I-like SAM-binding methyltransferase superfamily. NNMT/PNMT/TEMT family.</text>
</comment>
<comment type="online information" name="Atlas of Genetics and Cytogenetics in Oncology and Haematology">
    <link uri="https://atlasgeneticsoncology.org/gene/44506/NNMT"/>
</comment>
<accession>P40261</accession>
<feature type="chain" id="PRO_0000159706" description="Nicotinamide N-methyltransferase">
    <location>
        <begin position="1"/>
        <end position="264"/>
    </location>
</feature>
<feature type="binding site" evidence="2 8">
    <location>
        <position position="20"/>
    </location>
    <ligand>
        <name>S-adenosyl-L-methionine</name>
        <dbReference type="ChEBI" id="CHEBI:59789"/>
    </ligand>
</feature>
<feature type="binding site" evidence="2 8">
    <location>
        <position position="25"/>
    </location>
    <ligand>
        <name>S-adenosyl-L-methionine</name>
        <dbReference type="ChEBI" id="CHEBI:59789"/>
    </ligand>
</feature>
<feature type="binding site" evidence="2 8">
    <location>
        <position position="63"/>
    </location>
    <ligand>
        <name>S-adenosyl-L-methionine</name>
        <dbReference type="ChEBI" id="CHEBI:59789"/>
    </ligand>
</feature>
<feature type="binding site" evidence="2 8">
    <location>
        <position position="69"/>
    </location>
    <ligand>
        <name>S-adenosyl-L-methionine</name>
        <dbReference type="ChEBI" id="CHEBI:59789"/>
    </ligand>
</feature>
<feature type="binding site" evidence="2 8">
    <location>
        <position position="85"/>
    </location>
    <ligand>
        <name>S-adenosyl-L-methionine</name>
        <dbReference type="ChEBI" id="CHEBI:59789"/>
    </ligand>
</feature>
<feature type="binding site" evidence="2 8">
    <location>
        <position position="90"/>
    </location>
    <ligand>
        <name>S-adenosyl-L-methionine</name>
        <dbReference type="ChEBI" id="CHEBI:59789"/>
    </ligand>
</feature>
<feature type="binding site" evidence="2 8">
    <location>
        <begin position="142"/>
        <end position="143"/>
    </location>
    <ligand>
        <name>S-adenosyl-L-methionine</name>
        <dbReference type="ChEBI" id="CHEBI:59789"/>
    </ligand>
</feature>
<feature type="binding site" evidence="2 8">
    <location>
        <position position="163"/>
    </location>
    <ligand>
        <name>S-adenosyl-L-methionine</name>
        <dbReference type="ChEBI" id="CHEBI:59789"/>
    </ligand>
</feature>
<feature type="binding site" evidence="2">
    <location>
        <position position="197"/>
    </location>
    <ligand>
        <name>nicotinamide</name>
        <dbReference type="ChEBI" id="CHEBI:17154"/>
    </ligand>
</feature>
<feature type="binding site" evidence="2">
    <location>
        <position position="213"/>
    </location>
    <ligand>
        <name>nicotinamide</name>
        <dbReference type="ChEBI" id="CHEBI:17154"/>
    </ligand>
</feature>
<feature type="modified residue" description="Citrulline; alternate" evidence="5">
    <location>
        <position position="18"/>
    </location>
</feature>
<feature type="modified residue" description="N6-acetyllysine" evidence="14">
    <location>
        <position position="39"/>
    </location>
</feature>
<feature type="modified residue" description="Citrulline; alternate" evidence="5">
    <location>
        <position position="132"/>
    </location>
</feature>
<feature type="modified residue" description="Citrulline; alternate" evidence="5">
    <location>
        <position position="181"/>
    </location>
</feature>
<feature type="mutagenesis site" description="Has no effect on N-methyltransferase activity." evidence="5">
    <original>R</original>
    <variation>K</variation>
    <location>
        <position position="18"/>
    </location>
</feature>
<feature type="mutagenesis site" description="Loss of N-methyltransferase activity." evidence="2 3">
    <original>Y</original>
    <variation>A</variation>
    <location>
        <position position="20"/>
    </location>
</feature>
<feature type="mutagenesis site" description="Decreases N-methyltransferase activity." evidence="2">
    <original>Y</original>
    <variation>F</variation>
    <location>
        <position position="20"/>
    </location>
</feature>
<feature type="mutagenesis site" description="Loss of N-methyltransferase activity like its citrullinated counterpart." evidence="5">
    <original>R</original>
    <variation>K</variation>
    <location>
        <position position="132"/>
    </location>
</feature>
<feature type="mutagenesis site" description="Has no effect on N-methyltransferase activity." evidence="5">
    <original>R</original>
    <variation>K</variation>
    <location>
        <position position="181"/>
    </location>
</feature>
<feature type="mutagenesis site" description="Loss of N-methyltransferase activity." evidence="2">
    <original>D</original>
    <variation>A</variation>
    <location>
        <position position="197"/>
    </location>
</feature>
<feature type="mutagenesis site" description="Has no effect on N-methyltransferase activity." evidence="2">
    <original>S</original>
    <variation>A</variation>
    <location>
        <position position="201"/>
    </location>
</feature>
<feature type="mutagenesis site" description="Has no effect on N-methyltransferase activity." evidence="2">
    <original>S</original>
    <variation>A</variation>
    <location>
        <position position="213"/>
    </location>
</feature>
<feature type="turn" evidence="15">
    <location>
        <begin position="1"/>
        <end position="3"/>
    </location>
</feature>
<feature type="helix" evidence="18">
    <location>
        <begin position="8"/>
        <end position="10"/>
    </location>
</feature>
<feature type="helix" evidence="16">
    <location>
        <begin position="11"/>
        <end position="15"/>
    </location>
</feature>
<feature type="helix" evidence="18">
    <location>
        <begin position="17"/>
        <end position="24"/>
    </location>
</feature>
<feature type="strand" evidence="17">
    <location>
        <begin position="28"/>
        <end position="31"/>
    </location>
</feature>
<feature type="helix" evidence="18">
    <location>
        <begin position="33"/>
        <end position="50"/>
    </location>
</feature>
<feature type="strand" evidence="18">
    <location>
        <begin position="56"/>
        <end position="61"/>
    </location>
</feature>
<feature type="helix" evidence="18">
    <location>
        <begin position="69"/>
        <end position="71"/>
    </location>
</feature>
<feature type="helix" evidence="18">
    <location>
        <begin position="74"/>
        <end position="76"/>
    </location>
</feature>
<feature type="strand" evidence="18">
    <location>
        <begin position="78"/>
        <end position="86"/>
    </location>
</feature>
<feature type="helix" evidence="18">
    <location>
        <begin position="88"/>
        <end position="98"/>
    </location>
</feature>
<feature type="helix" evidence="18">
    <location>
        <begin position="108"/>
        <end position="117"/>
    </location>
</feature>
<feature type="strand" evidence="18">
    <location>
        <begin position="120"/>
        <end position="122"/>
    </location>
</feature>
<feature type="helix" evidence="18">
    <location>
        <begin position="124"/>
        <end position="134"/>
    </location>
</feature>
<feature type="strand" evidence="18">
    <location>
        <begin position="135"/>
        <end position="140"/>
    </location>
</feature>
<feature type="strand" evidence="18">
    <location>
        <begin position="145"/>
        <end position="147"/>
    </location>
</feature>
<feature type="turn" evidence="18">
    <location>
        <begin position="148"/>
        <end position="151"/>
    </location>
</feature>
<feature type="strand" evidence="18">
    <location>
        <begin position="157"/>
        <end position="164"/>
    </location>
</feature>
<feature type="helix" evidence="18">
    <location>
        <begin position="165"/>
        <end position="168"/>
    </location>
</feature>
<feature type="helix" evidence="18">
    <location>
        <begin position="173"/>
        <end position="184"/>
    </location>
</feature>
<feature type="strand" evidence="18">
    <location>
        <begin position="187"/>
        <end position="198"/>
    </location>
</feature>
<feature type="strand" evidence="16">
    <location>
        <begin position="201"/>
        <end position="205"/>
    </location>
</feature>
<feature type="turn" evidence="16">
    <location>
        <begin position="206"/>
        <end position="209"/>
    </location>
</feature>
<feature type="strand" evidence="16">
    <location>
        <begin position="210"/>
        <end position="214"/>
    </location>
</feature>
<feature type="helix" evidence="18">
    <location>
        <begin position="217"/>
        <end position="227"/>
    </location>
</feature>
<feature type="strand" evidence="18">
    <location>
        <begin position="230"/>
        <end position="237"/>
    </location>
</feature>
<feature type="strand" evidence="16">
    <location>
        <begin position="245"/>
        <end position="250"/>
    </location>
</feature>
<feature type="strand" evidence="18">
    <location>
        <begin position="252"/>
        <end position="259"/>
    </location>
</feature>
<proteinExistence type="evidence at protein level"/>
<dbReference type="EC" id="2.1.1.1" evidence="2 3"/>
<dbReference type="EMBL" id="U08021">
    <property type="protein sequence ID" value="AAA19904.1"/>
    <property type="molecule type" value="mRNA"/>
</dbReference>
<dbReference type="EMBL" id="U20971">
    <property type="protein sequence ID" value="AAA93158.1"/>
    <property type="molecule type" value="Genomic_DNA"/>
</dbReference>
<dbReference type="EMBL" id="U20970">
    <property type="protein sequence ID" value="AAA93158.1"/>
    <property type="status" value="JOINED"/>
    <property type="molecule type" value="Genomic_DNA"/>
</dbReference>
<dbReference type="EMBL" id="BC000234">
    <property type="protein sequence ID" value="AAH00234.1"/>
    <property type="molecule type" value="mRNA"/>
</dbReference>
<dbReference type="CCDS" id="CCDS8368.1"/>
<dbReference type="PIR" id="A54060">
    <property type="entry name" value="A54060"/>
</dbReference>
<dbReference type="RefSeq" id="NP_001358974.1">
    <property type="nucleotide sequence ID" value="NM_001372045.1"/>
</dbReference>
<dbReference type="RefSeq" id="NP_001358975.1">
    <property type="nucleotide sequence ID" value="NM_001372046.1"/>
</dbReference>
<dbReference type="RefSeq" id="NP_001358976.1">
    <property type="nucleotide sequence ID" value="NM_001372047.1"/>
</dbReference>
<dbReference type="RefSeq" id="NP_006160.1">
    <property type="nucleotide sequence ID" value="NM_006169.3"/>
</dbReference>
<dbReference type="PDB" id="2IIP">
    <property type="method" value="X-ray"/>
    <property type="resolution" value="2.05 A"/>
    <property type="chains" value="A/B/C/D=1-264"/>
</dbReference>
<dbReference type="PDB" id="3ROD">
    <property type="method" value="X-ray"/>
    <property type="resolution" value="2.72 A"/>
    <property type="chains" value="A/B/C/D=1-264"/>
</dbReference>
<dbReference type="PDB" id="5YJF">
    <property type="method" value="X-ray"/>
    <property type="resolution" value="2.49 A"/>
    <property type="chains" value="A/B/C/D=1-264"/>
</dbReference>
<dbReference type="PDB" id="6CHH">
    <property type="method" value="X-ray"/>
    <property type="resolution" value="2.30 A"/>
    <property type="chains" value="A/B/C/D=1-264"/>
</dbReference>
<dbReference type="PDB" id="6ORR">
    <property type="method" value="X-ray"/>
    <property type="resolution" value="2.25 A"/>
    <property type="chains" value="A/B/C/D=1-264"/>
</dbReference>
<dbReference type="PDB" id="6PVE">
    <property type="method" value="X-ray"/>
    <property type="resolution" value="2.30 A"/>
    <property type="chains" value="A/B/C/D=1-264"/>
</dbReference>
<dbReference type="PDB" id="6PVS">
    <property type="method" value="X-ray"/>
    <property type="resolution" value="2.58 A"/>
    <property type="chains" value="A/B/C/D=1-264"/>
</dbReference>
<dbReference type="PDB" id="7BKG">
    <property type="method" value="X-ray"/>
    <property type="resolution" value="2.33 A"/>
    <property type="chains" value="A/B/C/D=1-264"/>
</dbReference>
<dbReference type="PDB" id="7BLE">
    <property type="method" value="X-ray"/>
    <property type="resolution" value="2.81 A"/>
    <property type="chains" value="A/B/C/D=1-264"/>
</dbReference>
<dbReference type="PDB" id="7EGU">
    <property type="method" value="X-ray"/>
    <property type="resolution" value="1.90 A"/>
    <property type="chains" value="A=3-260"/>
</dbReference>
<dbReference type="PDB" id="7EHZ">
    <property type="method" value="X-ray"/>
    <property type="resolution" value="2.50 A"/>
    <property type="chains" value="A=3-260"/>
</dbReference>
<dbReference type="PDB" id="7EI2">
    <property type="method" value="X-ray"/>
    <property type="resolution" value="2.08 A"/>
    <property type="chains" value="A=3-260"/>
</dbReference>
<dbReference type="PDB" id="7ET7">
    <property type="method" value="X-ray"/>
    <property type="resolution" value="2.61 A"/>
    <property type="chains" value="A/B/C/D=1-261"/>
</dbReference>
<dbReference type="PDB" id="7EU5">
    <property type="method" value="X-ray"/>
    <property type="resolution" value="2.73 A"/>
    <property type="chains" value="A/B/C/D=1-261"/>
</dbReference>
<dbReference type="PDB" id="7NBJ">
    <property type="method" value="X-ray"/>
    <property type="resolution" value="2.27 A"/>
    <property type="chains" value="A/B/C/D=1-264"/>
</dbReference>
<dbReference type="PDB" id="7NBM">
    <property type="method" value="X-ray"/>
    <property type="resolution" value="2.69 A"/>
    <property type="chains" value="A/B/C/D=1-264"/>
</dbReference>
<dbReference type="PDB" id="7NBQ">
    <property type="method" value="X-ray"/>
    <property type="resolution" value="2.48 A"/>
    <property type="chains" value="A/B/C/D=1-264"/>
</dbReference>
<dbReference type="PDB" id="7RKK">
    <property type="method" value="X-ray"/>
    <property type="resolution" value="2.76 A"/>
    <property type="chains" value="A/B=1-264"/>
</dbReference>
<dbReference type="PDB" id="7RKL">
    <property type="method" value="X-ray"/>
    <property type="resolution" value="2.08 A"/>
    <property type="chains" value="A/B/C/D=1-264"/>
</dbReference>
<dbReference type="PDB" id="7SOK">
    <property type="method" value="X-ray"/>
    <property type="resolution" value="2.08 A"/>
    <property type="chains" value="A/B/C/D=1-264"/>
</dbReference>
<dbReference type="PDB" id="7WMC">
    <property type="method" value="X-ray"/>
    <property type="resolution" value="2.55 A"/>
    <property type="chains" value="A/B=3-260"/>
</dbReference>
<dbReference type="PDB" id="7WMT">
    <property type="method" value="X-ray"/>
    <property type="resolution" value="1.77 A"/>
    <property type="chains" value="A=3-200, A=217-264"/>
</dbReference>
<dbReference type="PDB" id="9ATV">
    <property type="method" value="X-ray"/>
    <property type="resolution" value="2.41 A"/>
    <property type="chains" value="A/B/C=1-264"/>
</dbReference>
<dbReference type="PDBsum" id="2IIP"/>
<dbReference type="PDBsum" id="3ROD"/>
<dbReference type="PDBsum" id="5YJF"/>
<dbReference type="PDBsum" id="6CHH"/>
<dbReference type="PDBsum" id="6ORR"/>
<dbReference type="PDBsum" id="6PVE"/>
<dbReference type="PDBsum" id="6PVS"/>
<dbReference type="PDBsum" id="7BKG"/>
<dbReference type="PDBsum" id="7BLE"/>
<dbReference type="PDBsum" id="7EGU"/>
<dbReference type="PDBsum" id="7EHZ"/>
<dbReference type="PDBsum" id="7EI2"/>
<dbReference type="PDBsum" id="7ET7"/>
<dbReference type="PDBsum" id="7EU5"/>
<dbReference type="PDBsum" id="7NBJ"/>
<dbReference type="PDBsum" id="7NBM"/>
<dbReference type="PDBsum" id="7NBQ"/>
<dbReference type="PDBsum" id="7RKK"/>
<dbReference type="PDBsum" id="7RKL"/>
<dbReference type="PDBsum" id="7SOK"/>
<dbReference type="PDBsum" id="7WMC"/>
<dbReference type="PDBsum" id="7WMT"/>
<dbReference type="PDBsum" id="9ATV"/>
<dbReference type="SMR" id="P40261"/>
<dbReference type="BioGRID" id="110900">
    <property type="interactions" value="14"/>
</dbReference>
<dbReference type="FunCoup" id="P40261">
    <property type="interactions" value="499"/>
</dbReference>
<dbReference type="IntAct" id="P40261">
    <property type="interactions" value="3"/>
</dbReference>
<dbReference type="MINT" id="P40261"/>
<dbReference type="STRING" id="9606.ENSP00000441434"/>
<dbReference type="BindingDB" id="P40261"/>
<dbReference type="ChEMBL" id="CHEMBL2346486"/>
<dbReference type="DrugBank" id="DB00627">
    <property type="generic name" value="Niacin"/>
</dbReference>
<dbReference type="DrugCentral" id="P40261"/>
<dbReference type="GuidetoPHARMACOLOGY" id="3205"/>
<dbReference type="GlyGen" id="P40261">
    <property type="glycosylation" value="1 site, 1 O-linked glycan (1 site)"/>
</dbReference>
<dbReference type="iPTMnet" id="P40261"/>
<dbReference type="MetOSite" id="P40261"/>
<dbReference type="PhosphoSitePlus" id="P40261"/>
<dbReference type="SwissPalm" id="P40261"/>
<dbReference type="BioMuta" id="NNMT"/>
<dbReference type="DMDM" id="730163"/>
<dbReference type="jPOST" id="P40261"/>
<dbReference type="MassIVE" id="P40261"/>
<dbReference type="PaxDb" id="9606-ENSP00000441434"/>
<dbReference type="PeptideAtlas" id="P40261"/>
<dbReference type="ProteomicsDB" id="55358"/>
<dbReference type="Pumba" id="P40261"/>
<dbReference type="TopDownProteomics" id="P40261"/>
<dbReference type="Antibodypedia" id="18379">
    <property type="antibodies" value="503 antibodies from 34 providers"/>
</dbReference>
<dbReference type="DNASU" id="4837"/>
<dbReference type="Ensembl" id="ENST00000299964.4">
    <property type="protein sequence ID" value="ENSP00000299964.3"/>
    <property type="gene ID" value="ENSG00000166741.9"/>
</dbReference>
<dbReference type="Ensembl" id="ENST00000535401.5">
    <property type="protein sequence ID" value="ENSP00000441434.1"/>
    <property type="gene ID" value="ENSG00000166741.9"/>
</dbReference>
<dbReference type="Ensembl" id="ENST00000713573.1">
    <property type="protein sequence ID" value="ENSP00000518865.1"/>
    <property type="gene ID" value="ENSG00000166741.9"/>
</dbReference>
<dbReference type="GeneID" id="4837"/>
<dbReference type="KEGG" id="hsa:4837"/>
<dbReference type="MANE-Select" id="ENST00000299964.4">
    <property type="protein sequence ID" value="ENSP00000299964.3"/>
    <property type="RefSeq nucleotide sequence ID" value="NM_006169.3"/>
    <property type="RefSeq protein sequence ID" value="NP_006160.1"/>
</dbReference>
<dbReference type="AGR" id="HGNC:7861"/>
<dbReference type="CTD" id="4837"/>
<dbReference type="DisGeNET" id="4837"/>
<dbReference type="GeneCards" id="NNMT"/>
<dbReference type="HGNC" id="HGNC:7861">
    <property type="gene designation" value="NNMT"/>
</dbReference>
<dbReference type="HPA" id="ENSG00000166741">
    <property type="expression patterns" value="Tissue enhanced (liver)"/>
</dbReference>
<dbReference type="MIM" id="600008">
    <property type="type" value="gene"/>
</dbReference>
<dbReference type="neXtProt" id="NX_P40261"/>
<dbReference type="OpenTargets" id="ENSG00000166741"/>
<dbReference type="PharmGKB" id="PA251"/>
<dbReference type="VEuPathDB" id="HostDB:ENSG00000166741"/>
<dbReference type="eggNOG" id="KOG4564">
    <property type="taxonomic scope" value="Eukaryota"/>
</dbReference>
<dbReference type="GeneTree" id="ENSGT00390000011708"/>
<dbReference type="HOGENOM" id="CLU_082526_1_1_1"/>
<dbReference type="InParanoid" id="P40261"/>
<dbReference type="OMA" id="CMYTAMA"/>
<dbReference type="OrthoDB" id="10050085at2759"/>
<dbReference type="PAN-GO" id="P40261">
    <property type="GO annotations" value="2 GO annotations based on evolutionary models"/>
</dbReference>
<dbReference type="PhylomeDB" id="P40261"/>
<dbReference type="TreeFam" id="TF313114"/>
<dbReference type="BRENDA" id="2.1.1.1">
    <property type="organism ID" value="2681"/>
</dbReference>
<dbReference type="PathwayCommons" id="P40261"/>
<dbReference type="Reactome" id="R-HSA-156581">
    <property type="pathway name" value="Methylation"/>
</dbReference>
<dbReference type="Reactome" id="R-HSA-197264">
    <property type="pathway name" value="Nicotinamide salvaging"/>
</dbReference>
<dbReference type="Reactome" id="R-HSA-2408508">
    <property type="pathway name" value="Metabolism of ingested SeMet, Sec, MeSec into H2Se"/>
</dbReference>
<dbReference type="SignaLink" id="P40261"/>
<dbReference type="BioGRID-ORCS" id="4837">
    <property type="hits" value="7 hits in 1162 CRISPR screens"/>
</dbReference>
<dbReference type="ChiTaRS" id="NNMT">
    <property type="organism name" value="human"/>
</dbReference>
<dbReference type="EvolutionaryTrace" id="P40261"/>
<dbReference type="GeneWiki" id="NNMT"/>
<dbReference type="GenomeRNAi" id="4837"/>
<dbReference type="Pharos" id="P40261">
    <property type="development level" value="Tchem"/>
</dbReference>
<dbReference type="PRO" id="PR:P40261"/>
<dbReference type="Proteomes" id="UP000005640">
    <property type="component" value="Chromosome 11"/>
</dbReference>
<dbReference type="RNAct" id="P40261">
    <property type="molecule type" value="protein"/>
</dbReference>
<dbReference type="Bgee" id="ENSG00000166741">
    <property type="expression patterns" value="Expressed in tendon of biceps brachii and 198 other cell types or tissues"/>
</dbReference>
<dbReference type="ExpressionAtlas" id="P40261">
    <property type="expression patterns" value="baseline and differential"/>
</dbReference>
<dbReference type="GO" id="GO:0005829">
    <property type="term" value="C:cytosol"/>
    <property type="evidence" value="ECO:0000318"/>
    <property type="project" value="GO_Central"/>
</dbReference>
<dbReference type="GO" id="GO:0008112">
    <property type="term" value="F:nicotinamide N-methyltransferase activity"/>
    <property type="evidence" value="ECO:0000314"/>
    <property type="project" value="UniProtKB"/>
</dbReference>
<dbReference type="GO" id="GO:0030760">
    <property type="term" value="F:pyridine N-methyltransferase activity"/>
    <property type="evidence" value="ECO:0000304"/>
    <property type="project" value="Reactome"/>
</dbReference>
<dbReference type="GO" id="GO:0032259">
    <property type="term" value="P:methylation"/>
    <property type="evidence" value="ECO:0000304"/>
    <property type="project" value="Reactome"/>
</dbReference>
<dbReference type="GO" id="GO:0006769">
    <property type="term" value="P:nicotinamide metabolic process"/>
    <property type="evidence" value="ECO:0000314"/>
    <property type="project" value="UniProtKB"/>
</dbReference>
<dbReference type="GO" id="GO:0045722">
    <property type="term" value="P:positive regulation of gluconeogenesis"/>
    <property type="evidence" value="ECO:0000250"/>
    <property type="project" value="UniProtKB"/>
</dbReference>
<dbReference type="GO" id="GO:0090312">
    <property type="term" value="P:positive regulation of protein deacetylation"/>
    <property type="evidence" value="ECO:0000250"/>
    <property type="project" value="UniProtKB"/>
</dbReference>
<dbReference type="CDD" id="cd02440">
    <property type="entry name" value="AdoMet_MTases"/>
    <property type="match status" value="1"/>
</dbReference>
<dbReference type="FunFam" id="3.40.50.150:FF:000065">
    <property type="entry name" value="Phenylethanolamine N-methyltransferase"/>
    <property type="match status" value="1"/>
</dbReference>
<dbReference type="Gene3D" id="3.40.50.150">
    <property type="entry name" value="Vaccinia Virus protein VP39"/>
    <property type="match status" value="1"/>
</dbReference>
<dbReference type="InterPro" id="IPR025820">
    <property type="entry name" value="NNMT/PNMT/TEMT_CS"/>
</dbReference>
<dbReference type="InterPro" id="IPR000940">
    <property type="entry name" value="NNMT_TEMT_trans"/>
</dbReference>
<dbReference type="InterPro" id="IPR053384">
    <property type="entry name" value="SAM-dep_methyltransferase"/>
</dbReference>
<dbReference type="InterPro" id="IPR029063">
    <property type="entry name" value="SAM-dependent_MTases_sf"/>
</dbReference>
<dbReference type="NCBIfam" id="NF041360">
    <property type="entry name" value="GntF_guanitoxin"/>
    <property type="match status" value="1"/>
</dbReference>
<dbReference type="PANTHER" id="PTHR10867:SF32">
    <property type="entry name" value="NICOTINAMIDE N-METHYLTRANSFERASE"/>
    <property type="match status" value="1"/>
</dbReference>
<dbReference type="PANTHER" id="PTHR10867">
    <property type="entry name" value="NNMT/PNMT/TEMT FAMILY MEMBER"/>
    <property type="match status" value="1"/>
</dbReference>
<dbReference type="Pfam" id="PF01234">
    <property type="entry name" value="NNMT_PNMT_TEMT"/>
    <property type="match status" value="1"/>
</dbReference>
<dbReference type="PIRSF" id="PIRSF000384">
    <property type="entry name" value="PNMTase"/>
    <property type="match status" value="1"/>
</dbReference>
<dbReference type="SUPFAM" id="SSF53335">
    <property type="entry name" value="S-adenosyl-L-methionine-dependent methyltransferases"/>
    <property type="match status" value="1"/>
</dbReference>
<dbReference type="PROSITE" id="PS01100">
    <property type="entry name" value="NNMT_PNMT_TEMT"/>
    <property type="match status" value="1"/>
</dbReference>
<dbReference type="PROSITE" id="PS51681">
    <property type="entry name" value="SAM_MT_NNMT_PNMT_TEMT"/>
    <property type="match status" value="1"/>
</dbReference>
<sequence>MESGFTSKDTYLSHFNPRDYLEKYYKFGSRHSAESQILKHLLKNLFKIFCLDGVKGDLLIDIGSGPTIYQLLSACESFKEIVVTDYSDQNLQELEKWLKKEPEAFDWSPVVTYVCDLEGNRVKGPEKEEKLRQAVKQVLKCDVTQSQPLGAVPLPPADCVLSTLCLDAACPDLPTYCRALRNLGSLLKPGGFLVIMDALKSSYYMIGEQKFSSLPLGREAVEAAVKEAGYTIEWFEVISQSYSSTMANNEGLFSLVARKLSRPL</sequence>
<protein>
    <recommendedName>
        <fullName evidence="9">Nicotinamide N-methyltransferase</fullName>
        <ecNumber evidence="2 3">2.1.1.1</ecNumber>
    </recommendedName>
</protein>
<keyword id="KW-0002">3D-structure</keyword>
<keyword id="KW-0007">Acetylation</keyword>
<keyword id="KW-0164">Citrullination</keyword>
<keyword id="KW-0963">Cytoplasm</keyword>
<keyword id="KW-0903">Direct protein sequencing</keyword>
<keyword id="KW-0489">Methyltransferase</keyword>
<keyword id="KW-1267">Proteomics identification</keyword>
<keyword id="KW-1185">Reference proteome</keyword>
<keyword id="KW-0949">S-adenosyl-L-methionine</keyword>
<keyword id="KW-0808">Transferase</keyword>
<name>NNMT_HUMAN</name>
<organism>
    <name type="scientific">Homo sapiens</name>
    <name type="common">Human</name>
    <dbReference type="NCBI Taxonomy" id="9606"/>
    <lineage>
        <taxon>Eukaryota</taxon>
        <taxon>Metazoa</taxon>
        <taxon>Chordata</taxon>
        <taxon>Craniata</taxon>
        <taxon>Vertebrata</taxon>
        <taxon>Euteleostomi</taxon>
        <taxon>Mammalia</taxon>
        <taxon>Eutheria</taxon>
        <taxon>Euarchontoglires</taxon>
        <taxon>Primates</taxon>
        <taxon>Haplorrhini</taxon>
        <taxon>Catarrhini</taxon>
        <taxon>Hominidae</taxon>
        <taxon>Homo</taxon>
    </lineage>
</organism>
<evidence type="ECO:0000250" key="1">
    <source>
        <dbReference type="UniProtKB" id="O55239"/>
    </source>
</evidence>
<evidence type="ECO:0000269" key="2">
    <source>
    </source>
</evidence>
<evidence type="ECO:0000269" key="3">
    <source>
    </source>
</evidence>
<evidence type="ECO:0000269" key="4">
    <source>
    </source>
</evidence>
<evidence type="ECO:0000269" key="5">
    <source>
    </source>
</evidence>
<evidence type="ECO:0000269" key="6">
    <source>
    </source>
</evidence>
<evidence type="ECO:0000269" key="7">
    <source>
    </source>
</evidence>
<evidence type="ECO:0000269" key="8">
    <source ref="12"/>
</evidence>
<evidence type="ECO:0000303" key="9">
    <source>
    </source>
</evidence>
<evidence type="ECO:0000303" key="10">
    <source>
    </source>
</evidence>
<evidence type="ECO:0000305" key="11"/>
<evidence type="ECO:0000305" key="12">
    <source>
    </source>
</evidence>
<evidence type="ECO:0000305" key="13">
    <source>
    </source>
</evidence>
<evidence type="ECO:0007744" key="14">
    <source>
    </source>
</evidence>
<evidence type="ECO:0007829" key="15">
    <source>
        <dbReference type="PDB" id="2IIP"/>
    </source>
</evidence>
<evidence type="ECO:0007829" key="16">
    <source>
        <dbReference type="PDB" id="7EGU"/>
    </source>
</evidence>
<evidence type="ECO:0007829" key="17">
    <source>
        <dbReference type="PDB" id="7NBJ"/>
    </source>
</evidence>
<evidence type="ECO:0007829" key="18">
    <source>
        <dbReference type="PDB" id="7WMT"/>
    </source>
</evidence>
<reference key="1">
    <citation type="journal article" date="1994" name="J. Biol. Chem.">
        <title>Human liver nicotinamide N-methyltransferase. cDNA cloning, expression, and biochemical characterization.</title>
        <authorList>
            <person name="Aksoy S."/>
            <person name="Szumlanski C.L."/>
            <person name="Weinshilboum R.M."/>
        </authorList>
    </citation>
    <scope>NUCLEOTIDE SEQUENCE [MRNA]</scope>
    <scope>PROTEIN SEQUENCE OF 2-16 AND 151-184</scope>
    <scope>FUNCTION</scope>
    <scope>CATALYTIC ACTIVITY</scope>
    <scope>BIOPHYSICOCHEMICAL PROPERTIES</scope>
    <scope>TISSUE SPECIFICITY</scope>
    <source>
        <tissue>Liver</tissue>
    </source>
</reference>
<reference key="2">
    <citation type="journal article" date="1995" name="Genomics">
        <title>Human nicotinamide N-methyltransferase gene: molecular cloning, structural characterization and chromosomal localization.</title>
        <authorList>
            <person name="Aksoy S."/>
            <person name="Brandriff B.F."/>
            <person name="Ward A."/>
            <person name="Little P.F."/>
            <person name="Weinshilboum R.M."/>
        </authorList>
    </citation>
    <scope>NUCLEOTIDE SEQUENCE [GENOMIC DNA]</scope>
</reference>
<reference key="3">
    <citation type="journal article" date="2004" name="Genome Res.">
        <title>The status, quality, and expansion of the NIH full-length cDNA project: the Mammalian Gene Collection (MGC).</title>
        <authorList>
            <consortium name="The MGC Project Team"/>
        </authorList>
    </citation>
    <scope>NUCLEOTIDE SEQUENCE [LARGE SCALE MRNA]</scope>
    <source>
        <tissue>Eye</tissue>
    </source>
</reference>
<reference key="4">
    <citation type="journal article" date="2000" name="Electrophoresis">
        <title>Human ERp29: isolation, primary structural characterisation and two-dimensional gel mapping.</title>
        <authorList>
            <person name="Hubbard M.J."/>
            <person name="McHugh N.J."/>
        </authorList>
    </citation>
    <scope>PARTIAL PROTEIN SEQUENCE</scope>
    <scope>IDENTIFICATION BY MASS SPECTROMETRY</scope>
    <source>
        <tissue>Liver</tissue>
    </source>
</reference>
<reference key="5">
    <citation type="journal article" date="2009" name="Science">
        <title>Lysine acetylation targets protein complexes and co-regulates major cellular functions.</title>
        <authorList>
            <person name="Choudhary C."/>
            <person name="Kumar C."/>
            <person name="Gnad F."/>
            <person name="Nielsen M.L."/>
            <person name="Rehman M."/>
            <person name="Walther T.C."/>
            <person name="Olsen J.V."/>
            <person name="Mann M."/>
        </authorList>
    </citation>
    <scope>ACETYLATION [LARGE SCALE ANALYSIS] AT LYS-39</scope>
    <scope>IDENTIFICATION BY MASS SPECTROMETRY [LARGE SCALE ANALYSIS]</scope>
</reference>
<reference key="6">
    <citation type="journal article" date="2011" name="BMC Syst. Biol.">
        <title>Initial characterization of the human central proteome.</title>
        <authorList>
            <person name="Burkard T.R."/>
            <person name="Planyavsky M."/>
            <person name="Kaupe I."/>
            <person name="Breitwieser F.P."/>
            <person name="Buerckstuemmer T."/>
            <person name="Bennett K.L."/>
            <person name="Superti-Furga G."/>
            <person name="Colinge J."/>
        </authorList>
    </citation>
    <scope>IDENTIFICATION BY MASS SPECTROMETRY [LARGE SCALE ANALYSIS]</scope>
</reference>
<reference key="7">
    <citation type="journal article" date="2013" name="Nat. Chem. Biol.">
        <title>NNMT promotes epigenetic remodeling in cancer by creating a metabolic methylation sink.</title>
        <authorList>
            <person name="Ulanovskaya O.A."/>
            <person name="Zuhl A.M."/>
            <person name="Cravatt B.F."/>
        </authorList>
    </citation>
    <scope>FUNCTION</scope>
    <scope>CATALYTIC ACTIVITY</scope>
    <scope>PATHWAY</scope>
    <scope>MUTAGENESIS OF TYR-20</scope>
</reference>
<reference key="8">
    <citation type="journal article" date="2014" name="J. Proteomics">
        <title>An enzyme assisted RP-RPLC approach for in-depth analysis of human liver phosphoproteome.</title>
        <authorList>
            <person name="Bian Y."/>
            <person name="Song C."/>
            <person name="Cheng K."/>
            <person name="Dong M."/>
            <person name="Wang F."/>
            <person name="Huang J."/>
            <person name="Sun D."/>
            <person name="Wang L."/>
            <person name="Ye M."/>
            <person name="Zou H."/>
        </authorList>
    </citation>
    <scope>IDENTIFICATION BY MASS SPECTROMETRY [LARGE SCALE ANALYSIS]</scope>
    <source>
        <tissue>Liver</tissue>
    </source>
</reference>
<reference key="9">
    <citation type="journal article" date="2015" name="Nat. Cell Biol.">
        <title>The metabolome regulates the epigenetic landscape during naive-to-primed human embryonic stem cell transition.</title>
        <authorList>
            <person name="Sperber H."/>
            <person name="Mathieu J."/>
            <person name="Wang Y."/>
            <person name="Ferreccio A."/>
            <person name="Hesson J."/>
            <person name="Xu Z."/>
            <person name="Fischer K.A."/>
            <person name="Devi A."/>
            <person name="Detraux D."/>
            <person name="Gu H."/>
            <person name="Battle S.L."/>
            <person name="Showalter M."/>
            <person name="Valensisi C."/>
            <person name="Bielas J.H."/>
            <person name="Ericson N.G."/>
            <person name="Margaretha L."/>
            <person name="Robitaille A.M."/>
            <person name="Margineantu D."/>
            <person name="Fiehn O."/>
            <person name="Hockenbery D."/>
            <person name="Blau C.A."/>
            <person name="Raftery D."/>
            <person name="Margolin A.A."/>
            <person name="Hawkins R.D."/>
            <person name="Moon R.T."/>
            <person name="Ware C.B."/>
            <person name="Ruohola-Baker H."/>
        </authorList>
    </citation>
    <scope>FUNCTION</scope>
</reference>
<reference key="10">
    <citation type="journal article" date="2018" name="ACS Chem. Biol.">
        <title>Citrullination Inactivates Nicotinamide- N-methyltransferase.</title>
        <authorList>
            <person name="Nemmara V.V."/>
            <person name="Tilvawala R."/>
            <person name="Salinger A.J."/>
            <person name="Miller L."/>
            <person name="Nguyen S.H."/>
            <person name="Weerapana E."/>
            <person name="Thompson P.R."/>
        </authorList>
    </citation>
    <scope>FUNCTION</scope>
    <scope>ACTIVITY REGULATION</scope>
    <scope>CITRULLINATION AT ARG-18; ARG-132 AND ARG-181</scope>
    <scope>IDENTIFICATION BY MASS SPECTROMETRY</scope>
    <scope>MUTAGENESIS OF ARG-18; ARG-132 AND ARG-181</scope>
</reference>
<reference key="11">
    <citation type="journal article" date="2019" name="Nature">
        <title>Proteomics reveals NNMT as a master metabolic regulator of cancer-associated fibroblasts.</title>
        <authorList>
            <person name="Eckert M.A."/>
            <person name="Coscia F."/>
            <person name="Chryplewicz A."/>
            <person name="Chang J.W."/>
            <person name="Hernandez K.M."/>
            <person name="Pan S."/>
            <person name="Tienda S.M."/>
            <person name="Nahotko D.A."/>
            <person name="Li G."/>
            <person name="Blazenovic I."/>
            <person name="Lastra R.R."/>
            <person name="Curtis M."/>
            <person name="Yamada S.D."/>
            <person name="Perets R."/>
            <person name="McGregor S.M."/>
            <person name="Andrade J."/>
            <person name="Fiehn O."/>
            <person name="Moellering R.E."/>
            <person name="Mann M."/>
            <person name="Lengyel E."/>
        </authorList>
    </citation>
    <scope>FUNCTION</scope>
    <scope>CATALYTIC ACTIVITY</scope>
</reference>
<reference key="12">
    <citation type="submission" date="2006-10" db="PDB data bank">
        <title>The crystal structure of human nicotinamide N-methyltransferase in complex with SAH.</title>
        <authorList>
            <consortium name="Structural genomics consortium (SGC)"/>
        </authorList>
    </citation>
    <scope>X-RAY CRYSTALLOGRAPHY (2.05 ANGSTROMS) IN COMPLEX WITH S-ADENOSYL-L-METHIONINE</scope>
</reference>
<reference key="13">
    <citation type="journal article" date="2011" name="Biochemistry">
        <title>Structural basis of substrate recognition in human nicotinamide N-methyltransferase.</title>
        <authorList>
            <person name="Peng Y."/>
            <person name="Sartini D."/>
            <person name="Pozzi V."/>
            <person name="Wilk D."/>
            <person name="Emanuelli M."/>
            <person name="Yee V.C."/>
        </authorList>
    </citation>
    <scope>X-RAY CRYSTALLOGRAPHY (2.72 ANGSTROMS) IN COMPLEX WITH S-ADENOSYL-L-METHIONINE AND NICOTINAMIDE</scope>
    <scope>FUNCTION</scope>
    <scope>CATALYTIC ACTIVITY</scope>
    <scope>BIOPHYSICOCHEMICAL PROPERTIES</scope>
    <scope>PATHWAY</scope>
    <scope>MUTAGENESIS OF TYR-20; ASP-197; SER-201 AND SER-213</scope>
</reference>
<gene>
    <name evidence="10" type="primary">NNMT</name>
</gene>